<proteinExistence type="evidence at protein level"/>
<organism>
    <name type="scientific">Sus scrofa</name>
    <name type="common">Pig</name>
    <dbReference type="NCBI Taxonomy" id="9823"/>
    <lineage>
        <taxon>Eukaryota</taxon>
        <taxon>Metazoa</taxon>
        <taxon>Chordata</taxon>
        <taxon>Craniata</taxon>
        <taxon>Vertebrata</taxon>
        <taxon>Euteleostomi</taxon>
        <taxon>Mammalia</taxon>
        <taxon>Eutheria</taxon>
        <taxon>Laurasiatheria</taxon>
        <taxon>Artiodactyla</taxon>
        <taxon>Suina</taxon>
        <taxon>Suidae</taxon>
        <taxon>Sus</taxon>
    </lineage>
</organism>
<reference key="1">
    <citation type="journal article" date="2002" name="J. Biol. Chem.">
        <title>Identification of neuropeptide W as the endogenous ligand for orphan G-protein-coupled receptors GPR7 and GPR8.</title>
        <authorList>
            <person name="Shimomura Y."/>
            <person name="Harada M."/>
            <person name="Goto M."/>
            <person name="Sugo T."/>
            <person name="Matsumoto Y."/>
            <person name="Abe M."/>
            <person name="Watanabe T."/>
            <person name="Asami T."/>
            <person name="Kitada C."/>
            <person name="Mori M."/>
            <person name="Onda H."/>
            <person name="Fujino M."/>
        </authorList>
    </citation>
    <scope>NUCLEOTIDE SEQUENCE [MRNA]</scope>
    <scope>PROTEIN SEQUENCE OF 33-52</scope>
    <scope>SYNTHESIS OF NPW23 AND NPW30</scope>
</reference>
<feature type="signal peptide" evidence="4">
    <location>
        <begin position="1"/>
        <end position="32"/>
    </location>
</feature>
<feature type="peptide" id="PRO_0000019846" description="Neuropeptide W-30">
    <location>
        <begin position="33"/>
        <end position="62"/>
    </location>
</feature>
<feature type="peptide" id="PRO_0000019847" description="Neuropeptide W-23">
    <location>
        <begin position="33"/>
        <end position="55"/>
    </location>
</feature>
<feature type="propeptide" id="PRO_0000019848" evidence="2">
    <location>
        <begin position="65"/>
        <end position="152"/>
    </location>
</feature>
<feature type="region of interest" description="Disordered" evidence="3">
    <location>
        <begin position="79"/>
        <end position="108"/>
    </location>
</feature>
<feature type="region of interest" description="Disordered" evidence="3">
    <location>
        <begin position="122"/>
        <end position="152"/>
    </location>
</feature>
<feature type="compositionally biased region" description="Pro residues" evidence="3">
    <location>
        <begin position="96"/>
        <end position="106"/>
    </location>
</feature>
<evidence type="ECO:0000250" key="1"/>
<evidence type="ECO:0000255" key="2"/>
<evidence type="ECO:0000256" key="3">
    <source>
        <dbReference type="SAM" id="MobiDB-lite"/>
    </source>
</evidence>
<evidence type="ECO:0000269" key="4">
    <source>
    </source>
</evidence>
<evidence type="ECO:0000305" key="5"/>
<sequence>MGARGPGPGATARRRLLALLLLLLLLPLPARAWYKHTASPRYHTVGRAAGLLMGLRRSPYMWRRALRPAAGPLAWDTFGQDVPPRGPSARNALSPGPAPRDAPLLPPGVQTLWQVRRGSFRSGIPVSAPRSPRARGSEPQPELGASSWTSAE</sequence>
<protein>
    <recommendedName>
        <fullName>Neuropeptide W</fullName>
    </recommendedName>
    <alternativeName>
        <fullName>Preproprotein L8</fullName>
        <shortName>PPL8</shortName>
    </alternativeName>
    <component>
        <recommendedName>
            <fullName>Neuropeptide W-23</fullName>
            <shortName>NPW23</shortName>
        </recommendedName>
        <alternativeName>
            <fullName>L8</fullName>
        </alternativeName>
    </component>
    <component>
        <recommendedName>
            <fullName>Neuropeptide W-30</fullName>
            <shortName>NPW30</shortName>
        </recommendedName>
        <alternativeName>
            <fullName>L8C</fullName>
        </alternativeName>
    </component>
</protein>
<name>NPW_PIG</name>
<accession>Q8MI35</accession>
<gene>
    <name type="primary">NPW</name>
    <name type="synonym">PPL8</name>
</gene>
<keyword id="KW-0165">Cleavage on pair of basic residues</keyword>
<keyword id="KW-0903">Direct protein sequencing</keyword>
<keyword id="KW-0527">Neuropeptide</keyword>
<keyword id="KW-1185">Reference proteome</keyword>
<keyword id="KW-0964">Secreted</keyword>
<keyword id="KW-0732">Signal</keyword>
<comment type="function">
    <text evidence="1">Plays a regulatory role in the organization of neuroendocrine signals accessing the anterior pituitary gland. Stimulates water drinking and food intake. May play a role in the hypothalamic response to stress (By similarity).</text>
</comment>
<comment type="subcellular location">
    <subcellularLocation>
        <location>Secreted</location>
    </subcellularLocation>
</comment>
<comment type="similarity">
    <text evidence="5">Belongs to the neuropeptide B/W family.</text>
</comment>
<dbReference type="EMBL" id="AB084277">
    <property type="protein sequence ID" value="BAC07173.1"/>
    <property type="molecule type" value="mRNA"/>
</dbReference>
<dbReference type="RefSeq" id="NP_998951.1">
    <property type="nucleotide sequence ID" value="NM_213786.2"/>
</dbReference>
<dbReference type="STRING" id="9823.ENSSSCP00000072770"/>
<dbReference type="PaxDb" id="9823-ENSSSCP00000008582"/>
<dbReference type="Ensembl" id="ENSSSCT00000068765.2">
    <property type="protein sequence ID" value="ENSSSCP00000072770.1"/>
    <property type="gene ID" value="ENSSSCG00000048627.2"/>
</dbReference>
<dbReference type="Ensembl" id="ENSSSCT00015039880.1">
    <property type="protein sequence ID" value="ENSSSCP00015015781.1"/>
    <property type="gene ID" value="ENSSSCG00015030097.1"/>
</dbReference>
<dbReference type="Ensembl" id="ENSSSCT00025028935.1">
    <property type="protein sequence ID" value="ENSSSCP00025012279.1"/>
    <property type="gene ID" value="ENSSSCG00025021302.1"/>
</dbReference>
<dbReference type="Ensembl" id="ENSSSCT00030052907.1">
    <property type="protein sequence ID" value="ENSSSCP00030024141.1"/>
    <property type="gene ID" value="ENSSSCG00030038014.1"/>
</dbReference>
<dbReference type="Ensembl" id="ENSSSCT00035086507.1">
    <property type="protein sequence ID" value="ENSSSCP00035036043.1"/>
    <property type="gene ID" value="ENSSSCG00035064290.1"/>
</dbReference>
<dbReference type="Ensembl" id="ENSSSCT00040082919.1">
    <property type="protein sequence ID" value="ENSSSCP00040036118.1"/>
    <property type="gene ID" value="ENSSSCG00040060951.1"/>
</dbReference>
<dbReference type="Ensembl" id="ENSSSCT00045064101.1">
    <property type="protein sequence ID" value="ENSSSCP00045045258.1"/>
    <property type="gene ID" value="ENSSSCG00045037174.1"/>
</dbReference>
<dbReference type="Ensembl" id="ENSSSCT00050107084.1">
    <property type="protein sequence ID" value="ENSSSCP00050047301.1"/>
    <property type="gene ID" value="ENSSSCG00050077800.1"/>
</dbReference>
<dbReference type="Ensembl" id="ENSSSCT00055061534.1">
    <property type="protein sequence ID" value="ENSSSCP00055049389.1"/>
    <property type="gene ID" value="ENSSSCG00055030827.1"/>
</dbReference>
<dbReference type="Ensembl" id="ENSSSCT00060109135.1">
    <property type="protein sequence ID" value="ENSSSCP00060048805.1"/>
    <property type="gene ID" value="ENSSSCG00060078865.1"/>
</dbReference>
<dbReference type="Ensembl" id="ENSSSCT00065085406.1">
    <property type="protein sequence ID" value="ENSSSCP00065037327.1"/>
    <property type="gene ID" value="ENSSSCG00065062268.1"/>
</dbReference>
<dbReference type="Ensembl" id="ENSSSCT00070055117.1">
    <property type="protein sequence ID" value="ENSSSCP00070046770.1"/>
    <property type="gene ID" value="ENSSSCG00070027485.1"/>
</dbReference>
<dbReference type="Ensembl" id="ENSSSCT00085051530">
    <property type="protein sequence ID" value="ENSSSCP00085036088"/>
    <property type="gene ID" value="ENSSSCG00085026889"/>
</dbReference>
<dbReference type="Ensembl" id="ENSSSCT00090024108">
    <property type="protein sequence ID" value="ENSSSCP00090014876"/>
    <property type="gene ID" value="ENSSSCG00090013767"/>
</dbReference>
<dbReference type="Ensembl" id="ENSSSCT00105056235">
    <property type="protein sequence ID" value="ENSSSCP00105039661"/>
    <property type="gene ID" value="ENSSSCG00105029571"/>
</dbReference>
<dbReference type="Ensembl" id="ENSSSCT00110074176">
    <property type="protein sequence ID" value="ENSSSCP00110052377"/>
    <property type="gene ID" value="ENSSSCG00110038842"/>
</dbReference>
<dbReference type="Ensembl" id="ENSSSCT00115035907">
    <property type="protein sequence ID" value="ENSSSCP00115034027"/>
    <property type="gene ID" value="ENSSSCG00115020273"/>
</dbReference>
<dbReference type="Ensembl" id="ENSSSCT00130035346">
    <property type="protein sequence ID" value="ENSSSCP00130017733"/>
    <property type="gene ID" value="ENSSSCG00130013383"/>
</dbReference>
<dbReference type="GeneID" id="396680"/>
<dbReference type="KEGG" id="ssc:396680"/>
<dbReference type="CTD" id="283869"/>
<dbReference type="VGNC" id="VGNC:110689">
    <property type="gene designation" value="NPW"/>
</dbReference>
<dbReference type="eggNOG" id="ENOG502SW0V">
    <property type="taxonomic scope" value="Eukaryota"/>
</dbReference>
<dbReference type="GeneTree" id="ENSGT00940000158204"/>
<dbReference type="HOGENOM" id="CLU_121719_0_0_1"/>
<dbReference type="InParanoid" id="Q8MI35"/>
<dbReference type="OrthoDB" id="9942334at2759"/>
<dbReference type="TreeFam" id="TF333179"/>
<dbReference type="Reactome" id="R-SSC-375276">
    <property type="pathway name" value="Peptide ligand-binding receptors"/>
</dbReference>
<dbReference type="Reactome" id="R-SSC-418594">
    <property type="pathway name" value="G alpha (i) signalling events"/>
</dbReference>
<dbReference type="Proteomes" id="UP000008227">
    <property type="component" value="Chromosome 3"/>
</dbReference>
<dbReference type="Proteomes" id="UP000314985">
    <property type="component" value="Chromosome 3"/>
</dbReference>
<dbReference type="Proteomes" id="UP000694570">
    <property type="component" value="Unplaced"/>
</dbReference>
<dbReference type="Proteomes" id="UP000694571">
    <property type="component" value="Unplaced"/>
</dbReference>
<dbReference type="Proteomes" id="UP000694720">
    <property type="component" value="Unplaced"/>
</dbReference>
<dbReference type="Proteomes" id="UP000694722">
    <property type="component" value="Unplaced"/>
</dbReference>
<dbReference type="Proteomes" id="UP000694723">
    <property type="component" value="Unplaced"/>
</dbReference>
<dbReference type="Proteomes" id="UP000694724">
    <property type="component" value="Unplaced"/>
</dbReference>
<dbReference type="Proteomes" id="UP000694725">
    <property type="component" value="Unplaced"/>
</dbReference>
<dbReference type="Proteomes" id="UP000694726">
    <property type="component" value="Unplaced"/>
</dbReference>
<dbReference type="Proteomes" id="UP000694727">
    <property type="component" value="Unplaced"/>
</dbReference>
<dbReference type="Proteomes" id="UP000694728">
    <property type="component" value="Unplaced"/>
</dbReference>
<dbReference type="Bgee" id="ENSSSCG00000048627">
    <property type="expression patterns" value="Expressed in blood and 14 other cell types or tissues"/>
</dbReference>
<dbReference type="GO" id="GO:0005576">
    <property type="term" value="C:extracellular region"/>
    <property type="evidence" value="ECO:0007669"/>
    <property type="project" value="UniProtKB-SubCell"/>
</dbReference>
<dbReference type="GO" id="GO:0001664">
    <property type="term" value="F:G protein-coupled receptor binding"/>
    <property type="evidence" value="ECO:0000318"/>
    <property type="project" value="GO_Central"/>
</dbReference>
<dbReference type="GO" id="GO:0007631">
    <property type="term" value="P:feeding behavior"/>
    <property type="evidence" value="ECO:0000318"/>
    <property type="project" value="GO_Central"/>
</dbReference>
<dbReference type="GO" id="GO:0007186">
    <property type="term" value="P:G protein-coupled receptor signaling pathway"/>
    <property type="evidence" value="ECO:0000318"/>
    <property type="project" value="GO_Central"/>
</dbReference>
<dbReference type="GO" id="GO:0007218">
    <property type="term" value="P:neuropeptide signaling pathway"/>
    <property type="evidence" value="ECO:0007669"/>
    <property type="project" value="UniProtKB-KW"/>
</dbReference>
<dbReference type="InterPro" id="IPR013297">
    <property type="entry name" value="Neuropept_BW_pre"/>
</dbReference>
<dbReference type="InterPro" id="IPR013299">
    <property type="entry name" value="Neuropept_W_pre"/>
</dbReference>
<dbReference type="PANTHER" id="PTHR28553">
    <property type="entry name" value="NEUROPEPTIDE B"/>
    <property type="match status" value="1"/>
</dbReference>
<dbReference type="PANTHER" id="PTHR28553:SF2">
    <property type="entry name" value="NEUROPEPTIDE W"/>
    <property type="match status" value="1"/>
</dbReference>
<dbReference type="Pfam" id="PF15180">
    <property type="entry name" value="NPBW"/>
    <property type="match status" value="1"/>
</dbReference>
<dbReference type="PRINTS" id="PR01888">
    <property type="entry name" value="NROPEPTIDEBW"/>
</dbReference>
<dbReference type="PRINTS" id="PR01890">
    <property type="entry name" value="PPNRPEPTIDEW"/>
</dbReference>